<evidence type="ECO:0000255" key="1">
    <source>
        <dbReference type="HAMAP-Rule" id="MF_00444"/>
    </source>
</evidence>
<reference key="1">
    <citation type="submission" date="2007-07" db="EMBL/GenBank/DDBJ databases">
        <title>Complete sequence of chromosome of Xanthobacter autotrophicus Py2.</title>
        <authorList>
            <consortium name="US DOE Joint Genome Institute"/>
            <person name="Copeland A."/>
            <person name="Lucas S."/>
            <person name="Lapidus A."/>
            <person name="Barry K."/>
            <person name="Glavina del Rio T."/>
            <person name="Hammon N."/>
            <person name="Israni S."/>
            <person name="Dalin E."/>
            <person name="Tice H."/>
            <person name="Pitluck S."/>
            <person name="Sims D."/>
            <person name="Brettin T."/>
            <person name="Bruce D."/>
            <person name="Detter J.C."/>
            <person name="Han C."/>
            <person name="Tapia R."/>
            <person name="Brainard J."/>
            <person name="Schmutz J."/>
            <person name="Larimer F."/>
            <person name="Land M."/>
            <person name="Hauser L."/>
            <person name="Kyrpides N."/>
            <person name="Kim E."/>
            <person name="Ensigns S.A."/>
            <person name="Richardson P."/>
        </authorList>
    </citation>
    <scope>NUCLEOTIDE SEQUENCE [LARGE SCALE GENOMIC DNA]</scope>
    <source>
        <strain>ATCC BAA-1158 / Py2</strain>
    </source>
</reference>
<keyword id="KW-0963">Cytoplasm</keyword>
<keyword id="KW-0378">Hydrolase</keyword>
<keyword id="KW-0645">Protease</keyword>
<keyword id="KW-1185">Reference proteome</keyword>
<keyword id="KW-0720">Serine protease</keyword>
<comment type="function">
    <text evidence="1">Cleaves peptides in various proteins in a process that requires ATP hydrolysis. Has a chymotrypsin-like activity. Plays a major role in the degradation of misfolded proteins.</text>
</comment>
<comment type="catalytic activity">
    <reaction evidence="1">
        <text>Hydrolysis of proteins to small peptides in the presence of ATP and magnesium. alpha-casein is the usual test substrate. In the absence of ATP, only oligopeptides shorter than five residues are hydrolyzed (such as succinyl-Leu-Tyr-|-NHMec, and Leu-Tyr-Leu-|-Tyr-Trp, in which cleavage of the -Tyr-|-Leu- and -Tyr-|-Trp bonds also occurs).</text>
        <dbReference type="EC" id="3.4.21.92"/>
    </reaction>
</comment>
<comment type="subunit">
    <text evidence="1">Fourteen ClpP subunits assemble into 2 heptameric rings which stack back to back to give a disk-like structure with a central cavity, resembling the structure of eukaryotic proteasomes.</text>
</comment>
<comment type="subcellular location">
    <subcellularLocation>
        <location evidence="1">Cytoplasm</location>
    </subcellularLocation>
</comment>
<comment type="similarity">
    <text evidence="1">Belongs to the peptidase S14 family.</text>
</comment>
<protein>
    <recommendedName>
        <fullName evidence="1">ATP-dependent Clp protease proteolytic subunit</fullName>
        <ecNumber evidence="1">3.4.21.92</ecNumber>
    </recommendedName>
    <alternativeName>
        <fullName evidence="1">Endopeptidase Clp</fullName>
    </alternativeName>
</protein>
<proteinExistence type="inferred from homology"/>
<accession>A7ILC6</accession>
<dbReference type="EC" id="3.4.21.92" evidence="1"/>
<dbReference type="EMBL" id="CP000781">
    <property type="protein sequence ID" value="ABS68819.1"/>
    <property type="molecule type" value="Genomic_DNA"/>
</dbReference>
<dbReference type="SMR" id="A7ILC6"/>
<dbReference type="STRING" id="78245.Xaut_3591"/>
<dbReference type="MEROPS" id="S14.001"/>
<dbReference type="KEGG" id="xau:Xaut_3591"/>
<dbReference type="eggNOG" id="COG0740">
    <property type="taxonomic scope" value="Bacteria"/>
</dbReference>
<dbReference type="HOGENOM" id="CLU_058707_3_2_5"/>
<dbReference type="OrthoDB" id="9802800at2"/>
<dbReference type="PhylomeDB" id="A7ILC6"/>
<dbReference type="Proteomes" id="UP000002417">
    <property type="component" value="Chromosome"/>
</dbReference>
<dbReference type="GO" id="GO:0005737">
    <property type="term" value="C:cytoplasm"/>
    <property type="evidence" value="ECO:0007669"/>
    <property type="project" value="UniProtKB-SubCell"/>
</dbReference>
<dbReference type="GO" id="GO:0009368">
    <property type="term" value="C:endopeptidase Clp complex"/>
    <property type="evidence" value="ECO:0007669"/>
    <property type="project" value="TreeGrafter"/>
</dbReference>
<dbReference type="GO" id="GO:0004176">
    <property type="term" value="F:ATP-dependent peptidase activity"/>
    <property type="evidence" value="ECO:0007669"/>
    <property type="project" value="InterPro"/>
</dbReference>
<dbReference type="GO" id="GO:0051117">
    <property type="term" value="F:ATPase binding"/>
    <property type="evidence" value="ECO:0007669"/>
    <property type="project" value="TreeGrafter"/>
</dbReference>
<dbReference type="GO" id="GO:0004252">
    <property type="term" value="F:serine-type endopeptidase activity"/>
    <property type="evidence" value="ECO:0007669"/>
    <property type="project" value="UniProtKB-UniRule"/>
</dbReference>
<dbReference type="GO" id="GO:0006515">
    <property type="term" value="P:protein quality control for misfolded or incompletely synthesized proteins"/>
    <property type="evidence" value="ECO:0007669"/>
    <property type="project" value="TreeGrafter"/>
</dbReference>
<dbReference type="CDD" id="cd07017">
    <property type="entry name" value="S14_ClpP_2"/>
    <property type="match status" value="1"/>
</dbReference>
<dbReference type="FunFam" id="3.90.226.10:FF:000001">
    <property type="entry name" value="ATP-dependent Clp protease proteolytic subunit"/>
    <property type="match status" value="1"/>
</dbReference>
<dbReference type="Gene3D" id="3.90.226.10">
    <property type="entry name" value="2-enoyl-CoA Hydratase, Chain A, domain 1"/>
    <property type="match status" value="1"/>
</dbReference>
<dbReference type="HAMAP" id="MF_00444">
    <property type="entry name" value="ClpP"/>
    <property type="match status" value="1"/>
</dbReference>
<dbReference type="InterPro" id="IPR001907">
    <property type="entry name" value="ClpP"/>
</dbReference>
<dbReference type="InterPro" id="IPR029045">
    <property type="entry name" value="ClpP/crotonase-like_dom_sf"/>
</dbReference>
<dbReference type="InterPro" id="IPR023562">
    <property type="entry name" value="ClpP/TepA"/>
</dbReference>
<dbReference type="InterPro" id="IPR033135">
    <property type="entry name" value="ClpP_His_AS"/>
</dbReference>
<dbReference type="InterPro" id="IPR018215">
    <property type="entry name" value="ClpP_Ser_AS"/>
</dbReference>
<dbReference type="NCBIfam" id="NF001368">
    <property type="entry name" value="PRK00277.1"/>
    <property type="match status" value="1"/>
</dbReference>
<dbReference type="NCBIfam" id="NF009205">
    <property type="entry name" value="PRK12553.1"/>
    <property type="match status" value="1"/>
</dbReference>
<dbReference type="PANTHER" id="PTHR10381">
    <property type="entry name" value="ATP-DEPENDENT CLP PROTEASE PROTEOLYTIC SUBUNIT"/>
    <property type="match status" value="1"/>
</dbReference>
<dbReference type="PANTHER" id="PTHR10381:SF70">
    <property type="entry name" value="ATP-DEPENDENT CLP PROTEASE PROTEOLYTIC SUBUNIT"/>
    <property type="match status" value="1"/>
</dbReference>
<dbReference type="Pfam" id="PF00574">
    <property type="entry name" value="CLP_protease"/>
    <property type="match status" value="1"/>
</dbReference>
<dbReference type="PRINTS" id="PR00127">
    <property type="entry name" value="CLPPROTEASEP"/>
</dbReference>
<dbReference type="SUPFAM" id="SSF52096">
    <property type="entry name" value="ClpP/crotonase"/>
    <property type="match status" value="1"/>
</dbReference>
<dbReference type="PROSITE" id="PS00382">
    <property type="entry name" value="CLP_PROTEASE_HIS"/>
    <property type="match status" value="1"/>
</dbReference>
<dbReference type="PROSITE" id="PS00381">
    <property type="entry name" value="CLP_PROTEASE_SER"/>
    <property type="match status" value="1"/>
</dbReference>
<organism>
    <name type="scientific">Xanthobacter autotrophicus (strain ATCC BAA-1158 / Py2)</name>
    <dbReference type="NCBI Taxonomy" id="78245"/>
    <lineage>
        <taxon>Bacteria</taxon>
        <taxon>Pseudomonadati</taxon>
        <taxon>Pseudomonadota</taxon>
        <taxon>Alphaproteobacteria</taxon>
        <taxon>Hyphomicrobiales</taxon>
        <taxon>Xanthobacteraceae</taxon>
        <taxon>Xanthobacter</taxon>
    </lineage>
</organism>
<feature type="chain" id="PRO_1000124727" description="ATP-dependent Clp protease proteolytic subunit">
    <location>
        <begin position="1"/>
        <end position="211"/>
    </location>
</feature>
<feature type="active site" description="Nucleophile" evidence="1">
    <location>
        <position position="107"/>
    </location>
</feature>
<feature type="active site" evidence="1">
    <location>
        <position position="132"/>
    </location>
</feature>
<name>CLPP_XANP2</name>
<gene>
    <name evidence="1" type="primary">clpP</name>
    <name type="ordered locus">Xaut_3591</name>
</gene>
<sequence length="211" mass="23435">MRDPVDTYMNYLIPMVVEQTNRGERSYDIFSRLLKERIIFLTGPVEDGMSTLAVAQLLFLEADNPKKEISMYINSPGGVVTSGLAIYDTMQFIKPAVSTLCIGQAASMGSLLLTAGEKDMRFALPNARIMVHQPSGGFQGQVTDIMLHAQEILNLKRRLNEIYVKHTGRSMDKIEDALERDNFMTAKAALDFGLIDAVIDQRPTDDTSKAA</sequence>